<gene>
    <name type="primary">samB</name>
    <name type="ORF">NFIA_075020</name>
</gene>
<sequence>MREVNFSIPNVNKASVNITTTLYDRRALDCTSTLPLINSLNHLAYLTTSSARIRDILTVDGGIERLVCILKEGRSRDLMEMWKWSLAFQCVVNIGVRGSESVRTRVVEADMVPVIATILDNYIKVVDKARARADSESQRQSSRHHSKAVPTSNDASGRSSFLEQSSTAEQRTSRRHAPPPSIEIPPQPFFQENHVADSNVLDVASPPRVPMTSPPERSTFGQDVHHHRTNEGRFAHGNHRHRMQPLATALPSMDAADGFGLRPVRDNERLPSMLPGFHTGLTSQPDSPTTPNAPVQPRSSAQATIARQRPSLRQQQSASGESDDGNGDGSTMDEDPASTEAAEPIVGLQNRMDIDDVGERDTILGGVSDSHDLTVTDPSEEQEAETFNITHRSTVDGSMINTDNAQNNAALGLSPTQAADNANSPALVPSPYSLYFRDRTTTAAHGVLTTMPRDEDVLMSLQLLAYVSKYCNLRSYFQHSHFVPKLKIDRELQMLEEGTSPIDLPEEEDEYLLPDDVNIFPLVEKFTVRHHSKDMQYWACVVMRNLCRKDESRGGIRQCAYYKCGKWEEFQRQFAKCRRCRRTKYCSKDCQKAAWVYHRHWCHTTP</sequence>
<reference key="1">
    <citation type="journal article" date="2008" name="PLoS Genet.">
        <title>Genomic islands in the pathogenic filamentous fungus Aspergillus fumigatus.</title>
        <authorList>
            <person name="Fedorova N.D."/>
            <person name="Khaldi N."/>
            <person name="Joardar V.S."/>
            <person name="Maiti R."/>
            <person name="Amedeo P."/>
            <person name="Anderson M.J."/>
            <person name="Crabtree J."/>
            <person name="Silva J.C."/>
            <person name="Badger J.H."/>
            <person name="Albarraq A."/>
            <person name="Angiuoli S."/>
            <person name="Bussey H."/>
            <person name="Bowyer P."/>
            <person name="Cotty P.J."/>
            <person name="Dyer P.S."/>
            <person name="Egan A."/>
            <person name="Galens K."/>
            <person name="Fraser-Liggett C.M."/>
            <person name="Haas B.J."/>
            <person name="Inman J.M."/>
            <person name="Kent R."/>
            <person name="Lemieux S."/>
            <person name="Malavazi I."/>
            <person name="Orvis J."/>
            <person name="Roemer T."/>
            <person name="Ronning C.M."/>
            <person name="Sundaram J.P."/>
            <person name="Sutton G."/>
            <person name="Turner G."/>
            <person name="Venter J.C."/>
            <person name="White O.R."/>
            <person name="Whitty B.R."/>
            <person name="Youngman P."/>
            <person name="Wolfe K.H."/>
            <person name="Goldman G.H."/>
            <person name="Wortman J.R."/>
            <person name="Jiang B."/>
            <person name="Denning D.W."/>
            <person name="Nierman W.C."/>
        </authorList>
    </citation>
    <scope>NUCLEOTIDE SEQUENCE [LARGE SCALE GENOMIC DNA]</scope>
    <source>
        <strain>ATCC 1020 / DSM 3700 / CBS 544.65 / FGSC A1164 / JCM 1740 / NRRL 181 / WB 181</strain>
    </source>
</reference>
<organism>
    <name type="scientific">Neosartorya fischeri (strain ATCC 1020 / DSM 3700 / CBS 544.65 / FGSC A1164 / JCM 1740 / NRRL 181 / WB 181)</name>
    <name type="common">Aspergillus fischerianus</name>
    <dbReference type="NCBI Taxonomy" id="331117"/>
    <lineage>
        <taxon>Eukaryota</taxon>
        <taxon>Fungi</taxon>
        <taxon>Dikarya</taxon>
        <taxon>Ascomycota</taxon>
        <taxon>Pezizomycotina</taxon>
        <taxon>Eurotiomycetes</taxon>
        <taxon>Eurotiomycetidae</taxon>
        <taxon>Eurotiales</taxon>
        <taxon>Aspergillaceae</taxon>
        <taxon>Aspergillus</taxon>
        <taxon>Aspergillus subgen. Fumigati</taxon>
    </lineage>
</organism>
<comment type="function">
    <text evidence="1">Involved in determination of the onset of polarized growth and morphogenesis. Plays a role in the regulation of branching in hyphae and spore formation (By similarity).</text>
</comment>
<comment type="subcellular location">
    <subcellularLocation>
        <location evidence="1">Cytoplasm</location>
    </subcellularLocation>
</comment>
<comment type="similarity">
    <text evidence="4">Belongs to the MUB1/samB family.</text>
</comment>
<name>MUB1_NEOFI</name>
<proteinExistence type="inferred from homology"/>
<protein>
    <recommendedName>
        <fullName>MYND-type zinc finger protein samB</fullName>
    </recommendedName>
    <alternativeName>
        <fullName>Suppressor of anucleate metulae protein B</fullName>
    </alternativeName>
</protein>
<keyword id="KW-0963">Cytoplasm</keyword>
<keyword id="KW-0479">Metal-binding</keyword>
<keyword id="KW-1185">Reference proteome</keyword>
<keyword id="KW-0749">Sporulation</keyword>
<keyword id="KW-0862">Zinc</keyword>
<keyword id="KW-0863">Zinc-finger</keyword>
<feature type="chain" id="PRO_0000393329" description="MYND-type zinc finger protein samB">
    <location>
        <begin position="1"/>
        <end position="606"/>
    </location>
</feature>
<feature type="zinc finger region" description="MYND-type; degenerate" evidence="2">
    <location>
        <begin position="561"/>
        <end position="602"/>
    </location>
</feature>
<feature type="region of interest" description="Disordered" evidence="3">
    <location>
        <begin position="134"/>
        <end position="188"/>
    </location>
</feature>
<feature type="region of interest" description="Disordered" evidence="3">
    <location>
        <begin position="203"/>
        <end position="225"/>
    </location>
</feature>
<feature type="region of interest" description="Disordered" evidence="3">
    <location>
        <begin position="262"/>
        <end position="352"/>
    </location>
</feature>
<feature type="region of interest" description="Disordered" evidence="3">
    <location>
        <begin position="365"/>
        <end position="384"/>
    </location>
</feature>
<feature type="compositionally biased region" description="Polar residues" evidence="3">
    <location>
        <begin position="149"/>
        <end position="170"/>
    </location>
</feature>
<feature type="compositionally biased region" description="Pro residues" evidence="3">
    <location>
        <begin position="178"/>
        <end position="188"/>
    </location>
</feature>
<feature type="compositionally biased region" description="Polar residues" evidence="3">
    <location>
        <begin position="280"/>
        <end position="316"/>
    </location>
</feature>
<feature type="compositionally biased region" description="Acidic residues" evidence="3">
    <location>
        <begin position="321"/>
        <end position="337"/>
    </location>
</feature>
<feature type="binding site" evidence="2">
    <location>
        <position position="577"/>
    </location>
    <ligand>
        <name>Zn(2+)</name>
        <dbReference type="ChEBI" id="CHEBI:29105"/>
    </ligand>
</feature>
<feature type="binding site" evidence="2">
    <location>
        <position position="580"/>
    </location>
    <ligand>
        <name>Zn(2+)</name>
        <dbReference type="ChEBI" id="CHEBI:29105"/>
    </ligand>
</feature>
<feature type="binding site" evidence="2">
    <location>
        <position position="598"/>
    </location>
    <ligand>
        <name>Zn(2+)</name>
        <dbReference type="ChEBI" id="CHEBI:29105"/>
    </ligand>
</feature>
<feature type="binding site" evidence="2">
    <location>
        <position position="602"/>
    </location>
    <ligand>
        <name>Zn(2+)</name>
        <dbReference type="ChEBI" id="CHEBI:29105"/>
    </ligand>
</feature>
<accession>A1DDX0</accession>
<dbReference type="EMBL" id="DS027696">
    <property type="protein sequence ID" value="EAW17577.1"/>
    <property type="molecule type" value="Genomic_DNA"/>
</dbReference>
<dbReference type="RefSeq" id="XP_001259474.1">
    <property type="nucleotide sequence ID" value="XM_001259473.1"/>
</dbReference>
<dbReference type="SMR" id="A1DDX0"/>
<dbReference type="EnsemblFungi" id="EAW17577">
    <property type="protein sequence ID" value="EAW17577"/>
    <property type="gene ID" value="NFIA_075020"/>
</dbReference>
<dbReference type="GeneID" id="4586154"/>
<dbReference type="KEGG" id="nfi:NFIA_075020"/>
<dbReference type="VEuPathDB" id="FungiDB:NFIA_075020"/>
<dbReference type="eggNOG" id="ENOG502QTM3">
    <property type="taxonomic scope" value="Eukaryota"/>
</dbReference>
<dbReference type="HOGENOM" id="CLU_014851_0_0_1"/>
<dbReference type="OMA" id="QDMQYWA"/>
<dbReference type="OrthoDB" id="5594178at2759"/>
<dbReference type="Proteomes" id="UP000006702">
    <property type="component" value="Unassembled WGS sequence"/>
</dbReference>
<dbReference type="GO" id="GO:0005737">
    <property type="term" value="C:cytoplasm"/>
    <property type="evidence" value="ECO:0007669"/>
    <property type="project" value="UniProtKB-SubCell"/>
</dbReference>
<dbReference type="GO" id="GO:1990304">
    <property type="term" value="C:MUB1-RAD6-UBR2 ubiquitin ligase complex"/>
    <property type="evidence" value="ECO:0007669"/>
    <property type="project" value="TreeGrafter"/>
</dbReference>
<dbReference type="GO" id="GO:0008270">
    <property type="term" value="F:zinc ion binding"/>
    <property type="evidence" value="ECO:0007669"/>
    <property type="project" value="UniProtKB-KW"/>
</dbReference>
<dbReference type="GO" id="GO:0007163">
    <property type="term" value="P:establishment or maintenance of cell polarity"/>
    <property type="evidence" value="ECO:0007669"/>
    <property type="project" value="TreeGrafter"/>
</dbReference>
<dbReference type="GO" id="GO:1900735">
    <property type="term" value="P:positive regulation of flocculation"/>
    <property type="evidence" value="ECO:0007669"/>
    <property type="project" value="EnsemblFungi"/>
</dbReference>
<dbReference type="GO" id="GO:0030435">
    <property type="term" value="P:sporulation resulting in formation of a cellular spore"/>
    <property type="evidence" value="ECO:0007669"/>
    <property type="project" value="UniProtKB-KW"/>
</dbReference>
<dbReference type="GO" id="GO:0006511">
    <property type="term" value="P:ubiquitin-dependent protein catabolic process"/>
    <property type="evidence" value="ECO:0007669"/>
    <property type="project" value="TreeGrafter"/>
</dbReference>
<dbReference type="FunFam" id="6.10.140.2220:FF:000003">
    <property type="entry name" value="MYND-type zinc finger protein"/>
    <property type="match status" value="1"/>
</dbReference>
<dbReference type="Gene3D" id="6.10.140.2220">
    <property type="match status" value="1"/>
</dbReference>
<dbReference type="InterPro" id="IPR016024">
    <property type="entry name" value="ARM-type_fold"/>
</dbReference>
<dbReference type="InterPro" id="IPR051664">
    <property type="entry name" value="MYND-type_zinc_finger"/>
</dbReference>
<dbReference type="InterPro" id="IPR002893">
    <property type="entry name" value="Znf_MYND"/>
</dbReference>
<dbReference type="PANTHER" id="PTHR47442">
    <property type="entry name" value="MYND-TYPE ZINC FINGER PROTEIN MUB1"/>
    <property type="match status" value="1"/>
</dbReference>
<dbReference type="PANTHER" id="PTHR47442:SF1">
    <property type="entry name" value="MYND-TYPE ZINC FINGER PROTEIN MUB1"/>
    <property type="match status" value="1"/>
</dbReference>
<dbReference type="Pfam" id="PF01753">
    <property type="entry name" value="zf-MYND"/>
    <property type="match status" value="1"/>
</dbReference>
<dbReference type="SUPFAM" id="SSF48371">
    <property type="entry name" value="ARM repeat"/>
    <property type="match status" value="1"/>
</dbReference>
<dbReference type="SUPFAM" id="SSF144232">
    <property type="entry name" value="HIT/MYND zinc finger-like"/>
    <property type="match status" value="1"/>
</dbReference>
<dbReference type="PROSITE" id="PS01360">
    <property type="entry name" value="ZF_MYND_1"/>
    <property type="match status" value="1"/>
</dbReference>
<dbReference type="PROSITE" id="PS50865">
    <property type="entry name" value="ZF_MYND_2"/>
    <property type="match status" value="1"/>
</dbReference>
<evidence type="ECO:0000250" key="1"/>
<evidence type="ECO:0000255" key="2">
    <source>
        <dbReference type="PROSITE-ProRule" id="PRU00134"/>
    </source>
</evidence>
<evidence type="ECO:0000256" key="3">
    <source>
        <dbReference type="SAM" id="MobiDB-lite"/>
    </source>
</evidence>
<evidence type="ECO:0000305" key="4"/>